<evidence type="ECO:0000250" key="1"/>
<evidence type="ECO:0000250" key="2">
    <source>
        <dbReference type="UniProtKB" id="A3RL54"/>
    </source>
</evidence>
<evidence type="ECO:0000250" key="3">
    <source>
        <dbReference type="UniProtKB" id="Q6UJY2"/>
    </source>
</evidence>
<evidence type="ECO:0000255" key="4"/>
<evidence type="ECO:0000269" key="5">
    <source>
    </source>
</evidence>
<evidence type="ECO:0000269" key="6">
    <source>
    </source>
</evidence>
<evidence type="ECO:0000303" key="7">
    <source>
    </source>
</evidence>
<evidence type="ECO:0000305" key="8"/>
<sequence>MAGIFKEFFFSTEDLPEVILTLSLISSIGAFLNRHLEDFPIPVPVILFLLGCSFEVLSFTSSQVQRYANAIQWMSPDLFFRIFTPVVFFTTAFDMDTYMLQKLFWQILLISIPGFLVNYILVLWHLASVNQLLLKPTQWLLFSAILVSSDPMLTAAAIRDLGLSRSLISLINGESLMTSVISLITFTSIMDFDQRLQSKRNHTLAEEIVGGICSYIIASFLFGILSSKLIQFWMSTVFGDDVNHISLIFSILYLIFYICELVGMSGIFTLAIVGLLLNSTSFKAAIEETLLLEFWTFLSRIAFLMVFTFFGLLIPAHTYLYIEFVDIYYSLNIYLTLIVLRFLTLLLISPVLSRVGHEFSWRWIFIMVCSEMKGMPNINMALLLAYSDLYFGSDKEKSQILFHGVLVCLITLVVNRFILPVAVTILGLRDATSTKYKSVCCTFQHFQELTKSAASALKFDKDLANADWNMIEKAITLENPYMLNEEETTEHQKVKCPHCNKEIDEIFNTEAMELANRRLLSAQIASYQRQYRNEILSQSAVQVLVGAAESFGEKKGKCMSLDTIKNYSESQKTVTFARKLLLNWVYNTRKEKEGPSKYFFFRICHTIVFTEEFEHVGYLVILMNIFPFIISWISQLNVIYHSELKHTNYCFLTLYILEALLKIAAMRKDFFSHAWNIFELAITLIGILHVILIEIDTIKYIFNETEVIVFIKVVQFFRILRIFKLIAPKLLQIIDKRMSHQKTFWYGILKGYVQGEADIMTIIDQITSSKQIKQMLLKQVIRNMEHAIKELGYLEYDHPEIAVTVKTKEEINVMLNMATEILKAFGLKGIISKTEGAGINKLIMAKKKEVLDSQSIIRPLTVEEVLYHIPWLDKNKDYINFIQEKAKVVTFDCGNDIFEEGDEPKGIYIIISGMVKLEKSKPGLGIDQMVESKEKDFPIIDTDYMLSGEIIGEINCLTNEPMKYSATCKTVVETCFIPKTHLYDAFEQCSPLIKQKMWLKLGLAITARKIREHLSYEDWNYNMQLKLSNIYVVDIPMSTKTDIYDENLIYVILIHGAVEDCLLRKTYRAPFLIPITCHQIQSIEDFTKVVIIQTPINMKTFRRNIRKFVPKHKSYLTPGLIGSVGTLEEGIQEERNVKEDGAHSAATARSPQPCSLLGTKFNCKESPRINLRKVRKE</sequence>
<dbReference type="EMBL" id="AK128084">
    <property type="protein sequence ID" value="BAC87265.1"/>
    <property type="molecule type" value="mRNA"/>
</dbReference>
<dbReference type="EMBL" id="BC044801">
    <property type="protein sequence ID" value="AAH44801.1"/>
    <property type="molecule type" value="mRNA"/>
</dbReference>
<dbReference type="EMBL" id="BK001328">
    <property type="protein sequence ID" value="DAA01462.1"/>
    <property type="status" value="ALT_SEQ"/>
    <property type="molecule type" value="mRNA"/>
</dbReference>
<dbReference type="CCDS" id="CCDS33817.1">
    <molecule id="Q4G0N8-1"/>
</dbReference>
<dbReference type="CCDS" id="CCDS82818.1">
    <molecule id="Q4G0N8-2"/>
</dbReference>
<dbReference type="RefSeq" id="NP_001307460.1">
    <molecule id="Q4G0N8-2"/>
    <property type="nucleotide sequence ID" value="NM_001320531.2"/>
</dbReference>
<dbReference type="RefSeq" id="NP_898884.1">
    <molecule id="Q4G0N8-1"/>
    <property type="nucleotide sequence ID" value="NM_183061.3"/>
</dbReference>
<dbReference type="SMR" id="Q4G0N8"/>
<dbReference type="BioGRID" id="130083">
    <property type="interactions" value="2"/>
</dbReference>
<dbReference type="FunCoup" id="Q4G0N8">
    <property type="interactions" value="109"/>
</dbReference>
<dbReference type="IntAct" id="Q4G0N8">
    <property type="interactions" value="1"/>
</dbReference>
<dbReference type="STRING" id="9606.ENSP00000306627"/>
<dbReference type="TCDB" id="2.A.36.7.5">
    <property type="family name" value="the monovalent cation:proton antiporter-1 (cpa1) family"/>
</dbReference>
<dbReference type="GlyCosmos" id="Q4G0N8">
    <property type="glycosylation" value="1 site, No reported glycans"/>
</dbReference>
<dbReference type="iPTMnet" id="Q4G0N8"/>
<dbReference type="PhosphoSitePlus" id="Q4G0N8"/>
<dbReference type="BioMuta" id="SLC9C1"/>
<dbReference type="DMDM" id="158563886"/>
<dbReference type="jPOST" id="Q4G0N8"/>
<dbReference type="MassIVE" id="Q4G0N8"/>
<dbReference type="PaxDb" id="9606-ENSP00000306627"/>
<dbReference type="PeptideAtlas" id="Q4G0N8"/>
<dbReference type="ProteomicsDB" id="62117">
    <molecule id="Q4G0N8-1"/>
</dbReference>
<dbReference type="ProteomicsDB" id="62118">
    <molecule id="Q4G0N8-2"/>
</dbReference>
<dbReference type="Antibodypedia" id="52176">
    <property type="antibodies" value="22 antibodies from 14 providers"/>
</dbReference>
<dbReference type="DNASU" id="285335"/>
<dbReference type="Ensembl" id="ENST00000305815.10">
    <molecule id="Q4G0N8-1"/>
    <property type="protein sequence ID" value="ENSP00000306627.5"/>
    <property type="gene ID" value="ENSG00000172139.15"/>
</dbReference>
<dbReference type="Ensembl" id="ENST00000487372.5">
    <molecule id="Q4G0N8-2"/>
    <property type="protein sequence ID" value="ENSP00000420688.1"/>
    <property type="gene ID" value="ENSG00000172139.15"/>
</dbReference>
<dbReference type="Ensembl" id="ENST00000642317.2">
    <molecule id="Q4G0N8-1"/>
    <property type="protein sequence ID" value="ENSP00000495147.1"/>
    <property type="gene ID" value="ENSG00000285044.2"/>
</dbReference>
<dbReference type="Ensembl" id="ENST00000647463.1">
    <molecule id="Q4G0N8-2"/>
    <property type="protein sequence ID" value="ENSP00000495048.1"/>
    <property type="gene ID" value="ENSG00000285044.2"/>
</dbReference>
<dbReference type="GeneID" id="285335"/>
<dbReference type="KEGG" id="hsa:285335"/>
<dbReference type="MANE-Select" id="ENST00000305815.10">
    <property type="protein sequence ID" value="ENSP00000306627.5"/>
    <property type="RefSeq nucleotide sequence ID" value="NM_183061.3"/>
    <property type="RefSeq protein sequence ID" value="NP_898884.1"/>
</dbReference>
<dbReference type="UCSC" id="uc003dyu.4">
    <molecule id="Q4G0N8-1"/>
    <property type="organism name" value="human"/>
</dbReference>
<dbReference type="AGR" id="HGNC:31401"/>
<dbReference type="CTD" id="285335"/>
<dbReference type="DisGeNET" id="285335"/>
<dbReference type="GeneCards" id="SLC9C1"/>
<dbReference type="HGNC" id="HGNC:31401">
    <property type="gene designation" value="SLC9C1"/>
</dbReference>
<dbReference type="HPA" id="ENSG00000172139">
    <property type="expression patterns" value="Group enriched (skin, testis)"/>
</dbReference>
<dbReference type="MIM" id="612738">
    <property type="type" value="gene"/>
</dbReference>
<dbReference type="neXtProt" id="NX_Q4G0N8"/>
<dbReference type="OpenTargets" id="ENSG00000172139"/>
<dbReference type="PharmGKB" id="PA134914619"/>
<dbReference type="VEuPathDB" id="HostDB:ENSG00000172139"/>
<dbReference type="eggNOG" id="KOG1965">
    <property type="taxonomic scope" value="Eukaryota"/>
</dbReference>
<dbReference type="GeneTree" id="ENSGT00940000162055"/>
<dbReference type="HOGENOM" id="CLU_003400_1_0_1"/>
<dbReference type="InParanoid" id="Q4G0N8"/>
<dbReference type="OMA" id="RVVTFDC"/>
<dbReference type="OrthoDB" id="441412at2759"/>
<dbReference type="PAN-GO" id="Q4G0N8">
    <property type="GO annotations" value="6 GO annotations based on evolutionary models"/>
</dbReference>
<dbReference type="PhylomeDB" id="Q4G0N8"/>
<dbReference type="TreeFam" id="TF328865"/>
<dbReference type="PathwayCommons" id="Q4G0N8"/>
<dbReference type="Reactome" id="R-HSA-2672351">
    <property type="pathway name" value="Stimuli-sensing channels"/>
</dbReference>
<dbReference type="SignaLink" id="Q4G0N8"/>
<dbReference type="BioGRID-ORCS" id="285335">
    <property type="hits" value="9 hits in 1142 CRISPR screens"/>
</dbReference>
<dbReference type="ChiTaRS" id="SLC9C1">
    <property type="organism name" value="human"/>
</dbReference>
<dbReference type="GeneWiki" id="SLC9A10"/>
<dbReference type="GenomeRNAi" id="285335"/>
<dbReference type="Pharos" id="Q4G0N8">
    <property type="development level" value="Tdark"/>
</dbReference>
<dbReference type="PRO" id="PR:Q4G0N8"/>
<dbReference type="Proteomes" id="UP000005640">
    <property type="component" value="Chromosome 3"/>
</dbReference>
<dbReference type="RNAct" id="Q4G0N8">
    <property type="molecule type" value="protein"/>
</dbReference>
<dbReference type="Bgee" id="ENSG00000172139">
    <property type="expression patterns" value="Expressed in male germ line stem cell (sensu Vertebrata) in testis and 63 other cell types or tissues"/>
</dbReference>
<dbReference type="ExpressionAtlas" id="Q4G0N8">
    <property type="expression patterns" value="baseline and differential"/>
</dbReference>
<dbReference type="GO" id="GO:0031514">
    <property type="term" value="C:motile cilium"/>
    <property type="evidence" value="ECO:0007669"/>
    <property type="project" value="UniProtKB-KW"/>
</dbReference>
<dbReference type="GO" id="GO:0005886">
    <property type="term" value="C:plasma membrane"/>
    <property type="evidence" value="ECO:0000318"/>
    <property type="project" value="GO_Central"/>
</dbReference>
<dbReference type="GO" id="GO:0005216">
    <property type="term" value="F:monoatomic ion channel activity"/>
    <property type="evidence" value="ECO:0007669"/>
    <property type="project" value="InterPro"/>
</dbReference>
<dbReference type="GO" id="GO:0015386">
    <property type="term" value="F:potassium:proton antiporter activity"/>
    <property type="evidence" value="ECO:0000318"/>
    <property type="project" value="GO_Central"/>
</dbReference>
<dbReference type="GO" id="GO:0015385">
    <property type="term" value="F:sodium:proton antiporter activity"/>
    <property type="evidence" value="ECO:0000318"/>
    <property type="project" value="GO_Central"/>
</dbReference>
<dbReference type="GO" id="GO:0030154">
    <property type="term" value="P:cell differentiation"/>
    <property type="evidence" value="ECO:0007669"/>
    <property type="project" value="UniProtKB-KW"/>
</dbReference>
<dbReference type="GO" id="GO:0030317">
    <property type="term" value="P:flagellated sperm motility"/>
    <property type="evidence" value="ECO:0007669"/>
    <property type="project" value="Ensembl"/>
</dbReference>
<dbReference type="GO" id="GO:0071805">
    <property type="term" value="P:potassium ion transmembrane transport"/>
    <property type="evidence" value="ECO:0000318"/>
    <property type="project" value="GO_Central"/>
</dbReference>
<dbReference type="GO" id="GO:0051453">
    <property type="term" value="P:regulation of intracellular pH"/>
    <property type="evidence" value="ECO:0000318"/>
    <property type="project" value="GO_Central"/>
</dbReference>
<dbReference type="GO" id="GO:0098719">
    <property type="term" value="P:sodium ion import across plasma membrane"/>
    <property type="evidence" value="ECO:0000318"/>
    <property type="project" value="GO_Central"/>
</dbReference>
<dbReference type="GO" id="GO:0007283">
    <property type="term" value="P:spermatogenesis"/>
    <property type="evidence" value="ECO:0007669"/>
    <property type="project" value="UniProtKB-KW"/>
</dbReference>
<dbReference type="CDD" id="cd00038">
    <property type="entry name" value="CAP_ED"/>
    <property type="match status" value="1"/>
</dbReference>
<dbReference type="FunFam" id="1.20.120.350:FF:000050">
    <property type="entry name" value="Solute carrier family 9 member C1"/>
    <property type="match status" value="1"/>
</dbReference>
<dbReference type="FunFam" id="2.60.120.10:FF:000067">
    <property type="entry name" value="Solute carrier family 9 member C1"/>
    <property type="match status" value="1"/>
</dbReference>
<dbReference type="Gene3D" id="6.10.140.1330">
    <property type="match status" value="1"/>
</dbReference>
<dbReference type="Gene3D" id="2.60.120.10">
    <property type="entry name" value="Jelly Rolls"/>
    <property type="match status" value="1"/>
</dbReference>
<dbReference type="Gene3D" id="1.20.120.350">
    <property type="entry name" value="Voltage-gated potassium channels. Chain C"/>
    <property type="match status" value="1"/>
</dbReference>
<dbReference type="InterPro" id="IPR018422">
    <property type="entry name" value="Cation/H_exchanger_CPA1"/>
</dbReference>
<dbReference type="InterPro" id="IPR006153">
    <property type="entry name" value="Cation/H_exchanger_TM"/>
</dbReference>
<dbReference type="InterPro" id="IPR000595">
    <property type="entry name" value="cNMP-bd_dom"/>
</dbReference>
<dbReference type="InterPro" id="IPR018490">
    <property type="entry name" value="cNMP-bd_dom_sf"/>
</dbReference>
<dbReference type="InterPro" id="IPR005821">
    <property type="entry name" value="Ion_trans_dom"/>
</dbReference>
<dbReference type="InterPro" id="IPR014710">
    <property type="entry name" value="RmlC-like_jellyroll"/>
</dbReference>
<dbReference type="InterPro" id="IPR027359">
    <property type="entry name" value="Volt_channel_dom_sf"/>
</dbReference>
<dbReference type="PANTHER" id="PTHR10110">
    <property type="entry name" value="SODIUM/HYDROGEN EXCHANGER"/>
    <property type="match status" value="1"/>
</dbReference>
<dbReference type="PANTHER" id="PTHR10110:SF87">
    <property type="entry name" value="SODIUM_HYDROGEN EXCHANGER 10"/>
    <property type="match status" value="1"/>
</dbReference>
<dbReference type="Pfam" id="PF00027">
    <property type="entry name" value="cNMP_binding"/>
    <property type="match status" value="1"/>
</dbReference>
<dbReference type="Pfam" id="PF00520">
    <property type="entry name" value="Ion_trans"/>
    <property type="match status" value="1"/>
</dbReference>
<dbReference type="Pfam" id="PF00999">
    <property type="entry name" value="Na_H_Exchanger"/>
    <property type="match status" value="1"/>
</dbReference>
<dbReference type="SUPFAM" id="SSF51206">
    <property type="entry name" value="cAMP-binding domain-like"/>
    <property type="match status" value="1"/>
</dbReference>
<dbReference type="SUPFAM" id="SSF81324">
    <property type="entry name" value="Voltage-gated potassium channels"/>
    <property type="match status" value="1"/>
</dbReference>
<dbReference type="PROSITE" id="PS50042">
    <property type="entry name" value="CNMP_BINDING_3"/>
    <property type="match status" value="1"/>
</dbReference>
<reference key="1">
    <citation type="journal article" date="2004" name="Nat. Genet.">
        <title>Complete sequencing and characterization of 21,243 full-length human cDNAs.</title>
        <authorList>
            <person name="Ota T."/>
            <person name="Suzuki Y."/>
            <person name="Nishikawa T."/>
            <person name="Otsuki T."/>
            <person name="Sugiyama T."/>
            <person name="Irie R."/>
            <person name="Wakamatsu A."/>
            <person name="Hayashi K."/>
            <person name="Sato H."/>
            <person name="Nagai K."/>
            <person name="Kimura K."/>
            <person name="Makita H."/>
            <person name="Sekine M."/>
            <person name="Obayashi M."/>
            <person name="Nishi T."/>
            <person name="Shibahara T."/>
            <person name="Tanaka T."/>
            <person name="Ishii S."/>
            <person name="Yamamoto J."/>
            <person name="Saito K."/>
            <person name="Kawai Y."/>
            <person name="Isono Y."/>
            <person name="Nakamura Y."/>
            <person name="Nagahari K."/>
            <person name="Murakami K."/>
            <person name="Yasuda T."/>
            <person name="Iwayanagi T."/>
            <person name="Wagatsuma M."/>
            <person name="Shiratori A."/>
            <person name="Sudo H."/>
            <person name="Hosoiri T."/>
            <person name="Kaku Y."/>
            <person name="Kodaira H."/>
            <person name="Kondo H."/>
            <person name="Sugawara M."/>
            <person name="Takahashi M."/>
            <person name="Kanda K."/>
            <person name="Yokoi T."/>
            <person name="Furuya T."/>
            <person name="Kikkawa E."/>
            <person name="Omura Y."/>
            <person name="Abe K."/>
            <person name="Kamihara K."/>
            <person name="Katsuta N."/>
            <person name="Sato K."/>
            <person name="Tanikawa M."/>
            <person name="Yamazaki M."/>
            <person name="Ninomiya K."/>
            <person name="Ishibashi T."/>
            <person name="Yamashita H."/>
            <person name="Murakawa K."/>
            <person name="Fujimori K."/>
            <person name="Tanai H."/>
            <person name="Kimata M."/>
            <person name="Watanabe M."/>
            <person name="Hiraoka S."/>
            <person name="Chiba Y."/>
            <person name="Ishida S."/>
            <person name="Ono Y."/>
            <person name="Takiguchi S."/>
            <person name="Watanabe S."/>
            <person name="Yosida M."/>
            <person name="Hotuta T."/>
            <person name="Kusano J."/>
            <person name="Kanehori K."/>
            <person name="Takahashi-Fujii A."/>
            <person name="Hara H."/>
            <person name="Tanase T.-O."/>
            <person name="Nomura Y."/>
            <person name="Togiya S."/>
            <person name="Komai F."/>
            <person name="Hara R."/>
            <person name="Takeuchi K."/>
            <person name="Arita M."/>
            <person name="Imose N."/>
            <person name="Musashino K."/>
            <person name="Yuuki H."/>
            <person name="Oshima A."/>
            <person name="Sasaki N."/>
            <person name="Aotsuka S."/>
            <person name="Yoshikawa Y."/>
            <person name="Matsunawa H."/>
            <person name="Ichihara T."/>
            <person name="Shiohata N."/>
            <person name="Sano S."/>
            <person name="Moriya S."/>
            <person name="Momiyama H."/>
            <person name="Satoh N."/>
            <person name="Takami S."/>
            <person name="Terashima Y."/>
            <person name="Suzuki O."/>
            <person name="Nakagawa S."/>
            <person name="Senoh A."/>
            <person name="Mizoguchi H."/>
            <person name="Goto Y."/>
            <person name="Shimizu F."/>
            <person name="Wakebe H."/>
            <person name="Hishigaki H."/>
            <person name="Watanabe T."/>
            <person name="Sugiyama A."/>
            <person name="Takemoto M."/>
            <person name="Kawakami B."/>
            <person name="Yamazaki M."/>
            <person name="Watanabe K."/>
            <person name="Kumagai A."/>
            <person name="Itakura S."/>
            <person name="Fukuzumi Y."/>
            <person name="Fujimori Y."/>
            <person name="Komiyama M."/>
            <person name="Tashiro H."/>
            <person name="Tanigami A."/>
            <person name="Fujiwara T."/>
            <person name="Ono T."/>
            <person name="Yamada K."/>
            <person name="Fujii Y."/>
            <person name="Ozaki K."/>
            <person name="Hirao M."/>
            <person name="Ohmori Y."/>
            <person name="Kawabata A."/>
            <person name="Hikiji T."/>
            <person name="Kobatake N."/>
            <person name="Inagaki H."/>
            <person name="Ikema Y."/>
            <person name="Okamoto S."/>
            <person name="Okitani R."/>
            <person name="Kawakami T."/>
            <person name="Noguchi S."/>
            <person name="Itoh T."/>
            <person name="Shigeta K."/>
            <person name="Senba T."/>
            <person name="Matsumura K."/>
            <person name="Nakajima Y."/>
            <person name="Mizuno T."/>
            <person name="Morinaga M."/>
            <person name="Sasaki M."/>
            <person name="Togashi T."/>
            <person name="Oyama M."/>
            <person name="Hata H."/>
            <person name="Watanabe M."/>
            <person name="Komatsu T."/>
            <person name="Mizushima-Sugano J."/>
            <person name="Satoh T."/>
            <person name="Shirai Y."/>
            <person name="Takahashi Y."/>
            <person name="Nakagawa K."/>
            <person name="Okumura K."/>
            <person name="Nagase T."/>
            <person name="Nomura N."/>
            <person name="Kikuchi H."/>
            <person name="Masuho Y."/>
            <person name="Yamashita R."/>
            <person name="Nakai K."/>
            <person name="Yada T."/>
            <person name="Nakamura Y."/>
            <person name="Ohara O."/>
            <person name="Isogai T."/>
            <person name="Sugano S."/>
        </authorList>
    </citation>
    <scope>NUCLEOTIDE SEQUENCE [LARGE SCALE MRNA] (ISOFORM 1)</scope>
    <scope>VARIANTS VAL-158; VAL-286; MET-348; VAL-364; ALA-424; ILE-705; LYS-732; ILE-768 AND SER-826</scope>
    <source>
        <tissue>Testis</tissue>
    </source>
</reference>
<reference key="2">
    <citation type="journal article" date="2004" name="Genome Res.">
        <title>The status, quality, and expansion of the NIH full-length cDNA project: the Mammalian Gene Collection (MGC).</title>
        <authorList>
            <consortium name="The MGC Project Team"/>
        </authorList>
    </citation>
    <scope>NUCLEOTIDE SEQUENCE [LARGE SCALE MRNA] (ISOFORM 2)</scope>
    <source>
        <tissue>Testis</tissue>
    </source>
</reference>
<reference key="3">
    <citation type="journal article" date="2003" name="BMC Genomics">
        <title>Gene discovery in the hamster: a comparative genomics approach for gene annotation by sequencing of hamster testis cDNAs.</title>
        <authorList>
            <person name="Oduru S."/>
            <person name="Campbell J.L."/>
            <person name="Karri S."/>
            <person name="Hendry W.J."/>
            <person name="Khan S.A."/>
            <person name="Williams S.C."/>
        </authorList>
    </citation>
    <scope>IDENTIFICATION</scope>
</reference>
<reference key="4">
    <citation type="journal article" date="2023" name="Nat. Commun.">
        <title>Control of intracellular pH and bicarbonate by CO2 diffusion into human sperm.</title>
        <authorList>
            <person name="Grahn E."/>
            <person name="Kaufmann S.V."/>
            <person name="Askarova M."/>
            <person name="Ninov M."/>
            <person name="Welp L.M."/>
            <person name="Berger T.K."/>
            <person name="Urlaub H."/>
            <person name="Kaupp U.B."/>
        </authorList>
    </citation>
    <scope>IDENTIFICATION BY MASS SPECTROMETRY</scope>
    <scope>CAUTION</scope>
</reference>
<gene>
    <name type="primary">SLC9C1</name>
    <name type="synonym">SLC9A10</name>
</gene>
<organism>
    <name type="scientific">Homo sapiens</name>
    <name type="common">Human</name>
    <dbReference type="NCBI Taxonomy" id="9606"/>
    <lineage>
        <taxon>Eukaryota</taxon>
        <taxon>Metazoa</taxon>
        <taxon>Chordata</taxon>
        <taxon>Craniata</taxon>
        <taxon>Vertebrata</taxon>
        <taxon>Euteleostomi</taxon>
        <taxon>Mammalia</taxon>
        <taxon>Eutheria</taxon>
        <taxon>Euarchontoglires</taxon>
        <taxon>Primates</taxon>
        <taxon>Haplorrhini</taxon>
        <taxon>Catarrhini</taxon>
        <taxon>Hominidae</taxon>
        <taxon>Homo</taxon>
    </lineage>
</organism>
<accession>Q4G0N8</accession>
<accession>Q6ZRP4</accession>
<accession>Q7RTP2</accession>
<comment type="function">
    <text evidence="3">Sperm-specific solute carrier involved in intracellular pH regulation of spermatozoa. Required for sperm motility and fertility. Involved in sperm cell hyperactivation, a step needed for sperm motility which is essential late in the preparation of sperm for fertilization. Required for the expression and bicarbonate regulation of the soluble adenylyl cyclase (sAC) (By similarity).</text>
</comment>
<comment type="subunit">
    <text evidence="1">Interacts with soluble adenylyl cyclase (sAC).</text>
</comment>
<comment type="subcellular location">
    <subcellularLocation>
        <location evidence="3">Cell projection</location>
        <location evidence="3">Cilium</location>
        <location evidence="3">Flagellum membrane</location>
        <topology evidence="4">Multi-pass membrane protein</topology>
    </subcellularLocation>
</comment>
<comment type="alternative products">
    <event type="alternative splicing"/>
    <isoform>
        <id>Q4G0N8-1</id>
        <name>1</name>
        <sequence type="displayed"/>
    </isoform>
    <isoform>
        <id>Q4G0N8-2</id>
        <name>2</name>
        <sequence type="described" ref="VSP_027010"/>
    </isoform>
</comment>
<comment type="tissue specificity">
    <text evidence="6">Sperm.</text>
</comment>
<comment type="domain">
    <text evidence="1">The ion transport-like region is related to the membrane segments of voltage-gated ion channels. Its function is unknown (By similarity).</text>
</comment>
<comment type="similarity">
    <text evidence="8">Belongs to the monovalent cation:proton antiporter 1 (CPA1) transporter (TC 2.A.36) family.</text>
</comment>
<comment type="caution">
    <text evidence="6">The transport mechanisms that drive proton efflux in sperm appear to be species-specific. While sea urchin SLC9C1 ortholog functions as a voltage-gated and cAMP-sensitive sodium:proton exchanger that dominantly regulates proton efflux in sperm, no such transporter activity is observed for human SLC9C1. Consistently, functionally conserved residues in the transport, voltage sensor and cyclic nucleotide-binding domains present in sea urchin SLC9C1 are missing in mammalian SLC9C1, suggesting alternative transport mechanisms between species. The transport activity of SLC9C1 remains to be elucidated.</text>
</comment>
<comment type="sequence caution" evidence="8">
    <conflict type="erroneous gene model prediction">
        <sequence resource="EMBL-CDS" id="DAA01462"/>
    </conflict>
</comment>
<proteinExistence type="evidence at protein level"/>
<protein>
    <recommendedName>
        <fullName>Solute carrier family 9 member C1</fullName>
    </recommendedName>
    <alternativeName>
        <fullName>Na(+)/H(+) exchanger 10</fullName>
        <shortName>NHE-10</shortName>
    </alternativeName>
    <alternativeName>
        <fullName>Sodium/hydrogen exchanger 10</fullName>
    </alternativeName>
    <alternativeName>
        <fullName>Solute carrier family 9 member 10</fullName>
    </alternativeName>
    <alternativeName>
        <fullName>Sperm-specific Na(+)/H(+) exchanger</fullName>
        <shortName>sNHE</shortName>
    </alternativeName>
</protein>
<keyword id="KW-0025">Alternative splicing</keyword>
<keyword id="KW-0050">Antiport</keyword>
<keyword id="KW-1003">Cell membrane</keyword>
<keyword id="KW-0966">Cell projection</keyword>
<keyword id="KW-0969">Cilium</keyword>
<keyword id="KW-0217">Developmental protein</keyword>
<keyword id="KW-0221">Differentiation</keyword>
<keyword id="KW-0282">Flagellum</keyword>
<keyword id="KW-0406">Ion transport</keyword>
<keyword id="KW-0472">Membrane</keyword>
<keyword id="KW-1267">Proteomics identification</keyword>
<keyword id="KW-1185">Reference proteome</keyword>
<keyword id="KW-0915">Sodium</keyword>
<keyword id="KW-0739">Sodium transport</keyword>
<keyword id="KW-0744">Spermatogenesis</keyword>
<keyword id="KW-0812">Transmembrane</keyword>
<keyword id="KW-1133">Transmembrane helix</keyword>
<keyword id="KW-0813">Transport</keyword>
<name>SL9C1_HUMAN</name>
<feature type="chain" id="PRO_0000295704" description="Solute carrier family 9 member C1">
    <location>
        <begin position="1"/>
        <end position="1177"/>
    </location>
</feature>
<feature type="topological domain" description="Extracellular" evidence="8">
    <location>
        <begin position="1"/>
        <end position="17"/>
    </location>
</feature>
<feature type="transmembrane region" description="Helical; Name=TM1" evidence="2">
    <location>
        <begin position="18"/>
        <end position="37"/>
    </location>
</feature>
<feature type="topological domain" description="Cytoplasmic" evidence="8">
    <location>
        <begin position="38"/>
        <end position="42"/>
    </location>
</feature>
<feature type="transmembrane region" description="Helical; Name=TM2" evidence="2">
    <location>
        <begin position="43"/>
        <end position="60"/>
    </location>
</feature>
<feature type="topological domain" description="Extracellular" evidence="8">
    <location>
        <begin position="61"/>
        <end position="76"/>
    </location>
</feature>
<feature type="transmembrane region" description="Helical; Name=TM3" evidence="2">
    <location>
        <begin position="77"/>
        <end position="93"/>
    </location>
</feature>
<feature type="topological domain" description="Cytoplasmic" evidence="8">
    <location>
        <begin position="94"/>
        <end position="103"/>
    </location>
</feature>
<feature type="transmembrane region" description="Helical; Name=TM4" evidence="2">
    <location>
        <begin position="104"/>
        <end position="129"/>
    </location>
</feature>
<feature type="topological domain" description="Extracellular" evidence="8">
    <location>
        <begin position="130"/>
        <end position="135"/>
    </location>
</feature>
<feature type="transmembrane region" description="Helical; Name=TM5" evidence="2">
    <location>
        <begin position="136"/>
        <end position="161"/>
    </location>
</feature>
<feature type="topological domain" description="Cytoplasmic" evidence="8">
    <location>
        <begin position="162"/>
        <end position="164"/>
    </location>
</feature>
<feature type="transmembrane region" description="Helical; Name=TM6" evidence="2">
    <location>
        <begin position="165"/>
        <end position="190"/>
    </location>
</feature>
<feature type="topological domain" description="Extracellular" evidence="8">
    <location>
        <begin position="191"/>
        <end position="204"/>
    </location>
</feature>
<feature type="transmembrane region" description="Helical; Name=TM7, linker" evidence="2">
    <location>
        <begin position="205"/>
        <end position="236"/>
    </location>
</feature>
<feature type="topological domain" description="Cytoplasmic" evidence="8">
    <location>
        <begin position="237"/>
        <end position="240"/>
    </location>
</feature>
<feature type="transmembrane region" description="Helical; Name=TM8" evidence="2">
    <location>
        <begin position="241"/>
        <end position="262"/>
    </location>
</feature>
<feature type="topological domain" description="Extracellular" evidence="8">
    <location>
        <begin position="263"/>
        <end position="265"/>
    </location>
</feature>
<feature type="transmembrane region" description="Helical; Name=TM9" evidence="2">
    <location>
        <begin position="266"/>
        <end position="279"/>
    </location>
</feature>
<feature type="topological domain" description="Cytoplasmic" evidence="8">
    <location>
        <begin position="280"/>
        <end position="286"/>
    </location>
</feature>
<feature type="transmembrane region" description="Helical; Name=TM10" evidence="2">
    <location>
        <begin position="287"/>
        <end position="319"/>
    </location>
</feature>
<feature type="topological domain" description="Extracellular" evidence="8">
    <location>
        <begin position="320"/>
        <end position="324"/>
    </location>
</feature>
<feature type="transmembrane region" description="Helical; Name=TM11" evidence="2">
    <location>
        <begin position="325"/>
        <end position="354"/>
    </location>
</feature>
<feature type="topological domain" description="Cytoplasmic" evidence="8">
    <location>
        <begin position="355"/>
        <end position="360"/>
    </location>
</feature>
<feature type="transmembrane region" description="Helical; Name=TM12" evidence="2">
    <location>
        <begin position="361"/>
        <end position="391"/>
    </location>
</feature>
<feature type="topological domain" description="Extracellular" evidence="8">
    <location>
        <begin position="392"/>
        <end position="395"/>
    </location>
</feature>
<feature type="transmembrane region" description="Helical; Name=TM13" evidence="2">
    <location>
        <begin position="396"/>
        <end position="426"/>
    </location>
</feature>
<feature type="topological domain" description="Cytoplasmic" evidence="8">
    <location>
        <begin position="427"/>
        <end position="612"/>
    </location>
</feature>
<feature type="transmembrane region" description="Helical; Name=S1" evidence="2">
    <location>
        <begin position="613"/>
        <end position="633"/>
    </location>
</feature>
<feature type="topological domain" description="Extracellular" evidence="8">
    <location>
        <begin position="634"/>
        <end position="637"/>
    </location>
</feature>
<feature type="transmembrane region" description="Helical; Name=S2" evidence="2">
    <location>
        <begin position="638"/>
        <end position="664"/>
    </location>
</feature>
<feature type="topological domain" description="Cytoplasmic" evidence="8">
    <location>
        <begin position="665"/>
        <end position="671"/>
    </location>
</feature>
<feature type="transmembrane region" description="Helical; Name=S3" evidence="2">
    <location>
        <begin position="672"/>
        <end position="696"/>
    </location>
</feature>
<feature type="topological domain" description="Extracellular" evidence="8">
    <location>
        <begin position="697"/>
        <end position="704"/>
    </location>
</feature>
<feature type="transmembrane region" description="Helical; Name=S4" evidence="2">
    <location>
        <begin position="705"/>
        <end position="731"/>
    </location>
</feature>
<feature type="topological domain" description="Cytoplasmic" evidence="8">
    <location>
        <begin position="732"/>
        <end position="1177"/>
    </location>
</feature>
<feature type="region of interest" description="Transport core domain" evidence="2">
    <location>
        <begin position="104"/>
        <end position="191"/>
    </location>
</feature>
<feature type="region of interest" description="Transport core domain" evidence="2">
    <location>
        <begin position="325"/>
        <end position="426"/>
    </location>
</feature>
<feature type="region of interest" description="Ion transport-like">
    <location>
        <begin position="598"/>
        <end position="678"/>
    </location>
</feature>
<feature type="splice variant" id="VSP_027010" description="In isoform 2." evidence="7">
    <location>
        <begin position="294"/>
        <end position="341"/>
    </location>
</feature>
<feature type="sequence variant" id="VAR_033324" description="In dbSNP:rs9828502." evidence="5">
    <original>I</original>
    <variation>V</variation>
    <location>
        <position position="158"/>
    </location>
</feature>
<feature type="sequence variant" id="VAR_033325" description="In dbSNP:rs9872691." evidence="5">
    <original>I</original>
    <variation>V</variation>
    <location>
        <position position="286"/>
    </location>
</feature>
<feature type="sequence variant" id="VAR_033326" description="In dbSNP:rs9809404." evidence="5">
    <original>I</original>
    <variation>M</variation>
    <location>
        <position position="348"/>
    </location>
</feature>
<feature type="sequence variant" id="VAR_050233" description="In dbSNP:rs9809384." evidence="5">
    <original>I</original>
    <variation>V</variation>
    <location>
        <position position="364"/>
    </location>
</feature>
<feature type="sequence variant" id="VAR_033327" description="In dbSNP:rs6768523." evidence="5">
    <original>T</original>
    <variation>A</variation>
    <location>
        <position position="424"/>
    </location>
</feature>
<feature type="sequence variant" id="VAR_033328" description="In dbSNP:rs4434123." evidence="5">
    <original>T</original>
    <variation>I</variation>
    <location>
        <position position="705"/>
    </location>
</feature>
<feature type="sequence variant" id="VAR_033329" description="In dbSNP:rs6781844." evidence="5">
    <original>Q</original>
    <variation>K</variation>
    <location>
        <position position="732"/>
    </location>
</feature>
<feature type="sequence variant" id="VAR_033330" description="In dbSNP:rs9288938." evidence="5">
    <original>S</original>
    <variation>I</variation>
    <location>
        <position position="768"/>
    </location>
</feature>
<feature type="sequence variant" id="VAR_061369" description="In dbSNP:rs28516377." evidence="5">
    <original>G</original>
    <variation>S</variation>
    <location>
        <position position="826"/>
    </location>
</feature>
<feature type="sequence conflict" description="In Ref. 1; BAC87265." evidence="8" ref="1">
    <original>M</original>
    <variation>I</variation>
    <location>
        <position position="74"/>
    </location>
</feature>
<feature type="sequence conflict" description="In Ref. 1; BAC87265." evidence="8" ref="1">
    <original>E</original>
    <variation>D</variation>
    <location>
        <position position="785"/>
    </location>
</feature>
<feature type="sequence conflict" description="In Ref. 1; BAC87265." evidence="8" ref="1">
    <original>I</original>
    <variation>T</variation>
    <location>
        <position position="788"/>
    </location>
</feature>